<dbReference type="EC" id="6.-.-.-" evidence="1"/>
<dbReference type="EMBL" id="AE016877">
    <property type="protein sequence ID" value="AAP10840.1"/>
    <property type="molecule type" value="Genomic_DNA"/>
</dbReference>
<dbReference type="RefSeq" id="NP_833639.1">
    <property type="nucleotide sequence ID" value="NC_004722.1"/>
</dbReference>
<dbReference type="RefSeq" id="WP_000403038.1">
    <property type="nucleotide sequence ID" value="NZ_CP138336.1"/>
</dbReference>
<dbReference type="SMR" id="Q812W2"/>
<dbReference type="STRING" id="226900.BC_3919"/>
<dbReference type="KEGG" id="bce:BC3919"/>
<dbReference type="PATRIC" id="fig|226900.8.peg.4041"/>
<dbReference type="HOGENOM" id="CLU_022249_1_0_9"/>
<dbReference type="OrthoDB" id="9765151at2"/>
<dbReference type="Proteomes" id="UP000001417">
    <property type="component" value="Chromosome"/>
</dbReference>
<dbReference type="GO" id="GO:0016874">
    <property type="term" value="F:ligase activity"/>
    <property type="evidence" value="ECO:0007669"/>
    <property type="project" value="UniProtKB-UniRule"/>
</dbReference>
<dbReference type="HAMAP" id="MF_01867">
    <property type="entry name" value="BshC"/>
    <property type="match status" value="1"/>
</dbReference>
<dbReference type="InterPro" id="IPR011199">
    <property type="entry name" value="Bacillithiol_biosynth_BshC"/>
</dbReference>
<dbReference type="InterPro" id="IPR055399">
    <property type="entry name" value="CC_BshC"/>
</dbReference>
<dbReference type="InterPro" id="IPR055398">
    <property type="entry name" value="Rossmann-like_BshC"/>
</dbReference>
<dbReference type="NCBIfam" id="TIGR03998">
    <property type="entry name" value="thiol_BshC"/>
    <property type="match status" value="1"/>
</dbReference>
<dbReference type="Pfam" id="PF24850">
    <property type="entry name" value="CC_BshC"/>
    <property type="match status" value="1"/>
</dbReference>
<dbReference type="Pfam" id="PF10079">
    <property type="entry name" value="Rossmann-like_BshC"/>
    <property type="match status" value="1"/>
</dbReference>
<dbReference type="PIRSF" id="PIRSF012535">
    <property type="entry name" value="UCP012535"/>
    <property type="match status" value="1"/>
</dbReference>
<name>BSHC_BACCR</name>
<sequence>MEIKEISVPQQGVVADYMNGKKEIQSCFDYMLTEDAFKQRLHDLREREFFRQDLVAHLLEYNTKLQAGESTLQNVKALGDENTYVVIAGQQAGLLTGPLYTIHKVISILQLAKEKEESLGVKVVPVFWIAGEDHDMDEINHTFVAKNKKMKKTIFYDRNPKKASASESELSVEDCRNWIEEIFKTYPETNFTKDVLKFVDDALKKSNTYVDFFAHLITKIFANSGLILVDSHHPELRKLEIPFFKRIISKYKEVQEGLRNQQEVIKELGYKPIIETKSHAVHIFMEIDDERVLLEDQQGKFVGKDGAHSFSYEELIEEMERNPARFSNNVVTRPLMQEYVFPTLAFIGGPGELAYWSELQQVFHTVGFQMPPVVPRLTITYVERDIATDLFDLQLRESDPFLNDVDKLRENWLSNQIEEPIDDHFEKAKKEIADIHTSLQQFVKKIEPGLGAFAGKNELKINEQIELLERMLKRNVEKKYEVQLNKFRRIQFALRPLGAPQERVWNVCYYLNQFGLDFVDRVMENPFSWDGKHHVIKL</sequence>
<comment type="function">
    <text evidence="1">Involved in bacillithiol (BSH) biosynthesis. May catalyze the last step of the pathway, the addition of cysteine to glucosamine malate (GlcN-Mal) to generate BSH.</text>
</comment>
<comment type="similarity">
    <text evidence="1">Belongs to the BshC family.</text>
</comment>
<organism>
    <name type="scientific">Bacillus cereus (strain ATCC 14579 / DSM 31 / CCUG 7414 / JCM 2152 / NBRC 15305 / NCIMB 9373 / NCTC 2599 / NRRL B-3711)</name>
    <dbReference type="NCBI Taxonomy" id="226900"/>
    <lineage>
        <taxon>Bacteria</taxon>
        <taxon>Bacillati</taxon>
        <taxon>Bacillota</taxon>
        <taxon>Bacilli</taxon>
        <taxon>Bacillales</taxon>
        <taxon>Bacillaceae</taxon>
        <taxon>Bacillus</taxon>
        <taxon>Bacillus cereus group</taxon>
    </lineage>
</organism>
<reference key="1">
    <citation type="journal article" date="2003" name="Nature">
        <title>Genome sequence of Bacillus cereus and comparative analysis with Bacillus anthracis.</title>
        <authorList>
            <person name="Ivanova N."/>
            <person name="Sorokin A."/>
            <person name="Anderson I."/>
            <person name="Galleron N."/>
            <person name="Candelon B."/>
            <person name="Kapatral V."/>
            <person name="Bhattacharyya A."/>
            <person name="Reznik G."/>
            <person name="Mikhailova N."/>
            <person name="Lapidus A."/>
            <person name="Chu L."/>
            <person name="Mazur M."/>
            <person name="Goltsman E."/>
            <person name="Larsen N."/>
            <person name="D'Souza M."/>
            <person name="Walunas T."/>
            <person name="Grechkin Y."/>
            <person name="Pusch G."/>
            <person name="Haselkorn R."/>
            <person name="Fonstein M."/>
            <person name="Ehrlich S.D."/>
            <person name="Overbeek R."/>
            <person name="Kyrpides N.C."/>
        </authorList>
    </citation>
    <scope>NUCLEOTIDE SEQUENCE [LARGE SCALE GENOMIC DNA]</scope>
    <source>
        <strain>ATCC 14579 / DSM 31 / CCUG 7414 / JCM 2152 / NBRC 15305 / NCIMB 9373 / NCTC 2599 / NRRL B-3711</strain>
    </source>
</reference>
<proteinExistence type="inferred from homology"/>
<protein>
    <recommendedName>
        <fullName evidence="1">Putative cysteine ligase BshC</fullName>
        <ecNumber evidence="1">6.-.-.-</ecNumber>
    </recommendedName>
</protein>
<keyword id="KW-0175">Coiled coil</keyword>
<keyword id="KW-0436">Ligase</keyword>
<keyword id="KW-1185">Reference proteome</keyword>
<accession>Q812W2</accession>
<gene>
    <name evidence="1" type="primary">bshC</name>
    <name type="ordered locus">BC_3919</name>
</gene>
<evidence type="ECO:0000255" key="1">
    <source>
        <dbReference type="HAMAP-Rule" id="MF_01867"/>
    </source>
</evidence>
<feature type="chain" id="PRO_0000378211" description="Putative cysteine ligase BshC">
    <location>
        <begin position="1"/>
        <end position="538"/>
    </location>
</feature>
<feature type="coiled-coil region" evidence="1">
    <location>
        <begin position="248"/>
        <end position="268"/>
    </location>
</feature>